<protein>
    <recommendedName>
        <fullName>HTH-type transcriptional regulator NorG</fullName>
    </recommendedName>
</protein>
<accession>Q2G1P1</accession>
<feature type="initiator methionine" description="Removed" evidence="3">
    <location>
        <position position="1"/>
    </location>
</feature>
<feature type="chain" id="PRO_0000305323" description="HTH-type transcriptional regulator NorG">
    <location>
        <begin position="2"/>
        <end position="442"/>
    </location>
</feature>
<feature type="domain" description="HTH gntR-type" evidence="2">
    <location>
        <begin position="2"/>
        <end position="46"/>
    </location>
</feature>
<feature type="DNA-binding region" description="H-T-H motif" evidence="2">
    <location>
        <begin position="6"/>
        <end position="25"/>
    </location>
</feature>
<feature type="modified residue" description="N6-(pyridoxal phosphate)lysine" evidence="1">
    <location>
        <position position="288"/>
    </location>
</feature>
<feature type="sequence conflict" description="In Ref. 2; AA sequence." evidence="4" ref="2">
    <original>S</original>
    <variation>P</variation>
    <location>
        <position position="5"/>
    </location>
</feature>
<feature type="sequence conflict" description="In Ref. 2; AA sequence." evidence="4" ref="2">
    <original>H</original>
    <variation>Q</variation>
    <location>
        <position position="6"/>
    </location>
</feature>
<evidence type="ECO:0000250" key="1"/>
<evidence type="ECO:0000255" key="2">
    <source>
        <dbReference type="PROSITE-ProRule" id="PRU00307"/>
    </source>
</evidence>
<evidence type="ECO:0000269" key="3">
    <source>
    </source>
</evidence>
<evidence type="ECO:0000305" key="4"/>
<organism>
    <name type="scientific">Staphylococcus aureus (strain NCTC 8325 / PS 47)</name>
    <dbReference type="NCBI Taxonomy" id="93061"/>
    <lineage>
        <taxon>Bacteria</taxon>
        <taxon>Bacillati</taxon>
        <taxon>Bacillota</taxon>
        <taxon>Bacilli</taxon>
        <taxon>Bacillales</taxon>
        <taxon>Staphylococcaceae</taxon>
        <taxon>Staphylococcus</taxon>
    </lineage>
</organism>
<gene>
    <name type="primary">norG</name>
    <name type="ordered locus">SAOUHSC_00064</name>
</gene>
<dbReference type="EMBL" id="CP000253">
    <property type="protein sequence ID" value="ABD29250.1"/>
    <property type="status" value="ALT_INIT"/>
    <property type="molecule type" value="Genomic_DNA"/>
</dbReference>
<dbReference type="RefSeq" id="YP_498667.1">
    <property type="nucleotide sequence ID" value="NC_007795.1"/>
</dbReference>
<dbReference type="SMR" id="Q2G1P1"/>
<dbReference type="STRING" id="93061.SAOUHSC_00064"/>
<dbReference type="GeneID" id="3919094"/>
<dbReference type="KEGG" id="sao:SAOUHSC_00064"/>
<dbReference type="PATRIC" id="fig|93061.5.peg.56"/>
<dbReference type="HOGENOM" id="CLU_017584_0_0_9"/>
<dbReference type="OrthoDB" id="9802328at2"/>
<dbReference type="Proteomes" id="UP000008816">
    <property type="component" value="Chromosome"/>
</dbReference>
<dbReference type="GO" id="GO:0003677">
    <property type="term" value="F:DNA binding"/>
    <property type="evidence" value="ECO:0007669"/>
    <property type="project" value="UniProtKB-KW"/>
</dbReference>
<dbReference type="GO" id="GO:0003700">
    <property type="term" value="F:DNA-binding transcription factor activity"/>
    <property type="evidence" value="ECO:0007669"/>
    <property type="project" value="InterPro"/>
</dbReference>
<dbReference type="GO" id="GO:0030170">
    <property type="term" value="F:pyridoxal phosphate binding"/>
    <property type="evidence" value="ECO:0007669"/>
    <property type="project" value="InterPro"/>
</dbReference>
<dbReference type="GO" id="GO:0008483">
    <property type="term" value="F:transaminase activity"/>
    <property type="evidence" value="ECO:0000318"/>
    <property type="project" value="GO_Central"/>
</dbReference>
<dbReference type="GO" id="GO:1901605">
    <property type="term" value="P:alpha-amino acid metabolic process"/>
    <property type="evidence" value="ECO:0000318"/>
    <property type="project" value="GO_Central"/>
</dbReference>
<dbReference type="GO" id="GO:0009058">
    <property type="term" value="P:biosynthetic process"/>
    <property type="evidence" value="ECO:0007669"/>
    <property type="project" value="InterPro"/>
</dbReference>
<dbReference type="CDD" id="cd00609">
    <property type="entry name" value="AAT_like"/>
    <property type="match status" value="1"/>
</dbReference>
<dbReference type="CDD" id="cd07377">
    <property type="entry name" value="WHTH_GntR"/>
    <property type="match status" value="1"/>
</dbReference>
<dbReference type="FunFam" id="3.40.640.10:FF:000023">
    <property type="entry name" value="Transcriptional regulator, GntR family"/>
    <property type="match status" value="1"/>
</dbReference>
<dbReference type="Gene3D" id="3.90.1150.10">
    <property type="entry name" value="Aspartate Aminotransferase, domain 1"/>
    <property type="match status" value="1"/>
</dbReference>
<dbReference type="Gene3D" id="3.40.640.10">
    <property type="entry name" value="Type I PLP-dependent aspartate aminotransferase-like (Major domain)"/>
    <property type="match status" value="1"/>
</dbReference>
<dbReference type="Gene3D" id="1.10.10.10">
    <property type="entry name" value="Winged helix-like DNA-binding domain superfamily/Winged helix DNA-binding domain"/>
    <property type="match status" value="1"/>
</dbReference>
<dbReference type="InterPro" id="IPR004839">
    <property type="entry name" value="Aminotransferase_I/II_large"/>
</dbReference>
<dbReference type="InterPro" id="IPR050859">
    <property type="entry name" value="Class-I_PLP-dep_aminotransf"/>
</dbReference>
<dbReference type="InterPro" id="IPR015424">
    <property type="entry name" value="PyrdxlP-dep_Trfase"/>
</dbReference>
<dbReference type="InterPro" id="IPR015421">
    <property type="entry name" value="PyrdxlP-dep_Trfase_major"/>
</dbReference>
<dbReference type="InterPro" id="IPR015422">
    <property type="entry name" value="PyrdxlP-dep_Trfase_small"/>
</dbReference>
<dbReference type="InterPro" id="IPR000524">
    <property type="entry name" value="Tscrpt_reg_HTH_GntR"/>
</dbReference>
<dbReference type="InterPro" id="IPR036388">
    <property type="entry name" value="WH-like_DNA-bd_sf"/>
</dbReference>
<dbReference type="InterPro" id="IPR036390">
    <property type="entry name" value="WH_DNA-bd_sf"/>
</dbReference>
<dbReference type="PANTHER" id="PTHR42790">
    <property type="entry name" value="AMINOTRANSFERASE"/>
    <property type="match status" value="1"/>
</dbReference>
<dbReference type="PANTHER" id="PTHR42790:SF19">
    <property type="entry name" value="KYNURENINE_ALPHA-AMINOADIPATE AMINOTRANSFERASE, MITOCHONDRIAL"/>
    <property type="match status" value="1"/>
</dbReference>
<dbReference type="Pfam" id="PF00155">
    <property type="entry name" value="Aminotran_1_2"/>
    <property type="match status" value="1"/>
</dbReference>
<dbReference type="Pfam" id="PF00392">
    <property type="entry name" value="GntR"/>
    <property type="match status" value="1"/>
</dbReference>
<dbReference type="PRINTS" id="PR00035">
    <property type="entry name" value="HTHGNTR"/>
</dbReference>
<dbReference type="SMART" id="SM00345">
    <property type="entry name" value="HTH_GNTR"/>
    <property type="match status" value="1"/>
</dbReference>
<dbReference type="SUPFAM" id="SSF53383">
    <property type="entry name" value="PLP-dependent transferases"/>
    <property type="match status" value="1"/>
</dbReference>
<dbReference type="SUPFAM" id="SSF46785">
    <property type="entry name" value="Winged helix' DNA-binding domain"/>
    <property type="match status" value="1"/>
</dbReference>
<dbReference type="PROSITE" id="PS50949">
    <property type="entry name" value="HTH_GNTR"/>
    <property type="match status" value="1"/>
</dbReference>
<name>NORG_STAA8</name>
<comment type="function">
    <text evidence="3">Positively regulates the expression of the NorB efflux pump and negatively regulates the expression of the AbcA efflux pump. Binds specifically to the promoters of norA, norB and norC and abcA genes. Overexpression of norG leads to an increase in the level of resistance to quinolones, associated with a threefold increase in norB transcripts. Disruption of norG leads to an increase in the level of resistance to methicillin, cefotaxime, penicillin G, and nafcillin, associated with a threefold increase in abcA transcripts. Could also have an aminotransferase activity.</text>
</comment>
<comment type="cofactor">
    <cofactor evidence="4">
        <name>pyridoxal 5'-phosphate</name>
        <dbReference type="ChEBI" id="CHEBI:597326"/>
    </cofactor>
</comment>
<comment type="induction">
    <text evidence="3">Down-regulated by MgrA.</text>
</comment>
<comment type="similarity">
    <text evidence="4">In the C-terminal section; belongs to the class-I pyridoxal-phosphate-dependent aminotransferase family.</text>
</comment>
<comment type="sequence caution" evidence="4">
    <conflict type="erroneous initiation">
        <sequence resource="EMBL-CDS" id="ABD29250"/>
    </conflict>
</comment>
<keyword id="KW-0010">Activator</keyword>
<keyword id="KW-0032">Aminotransferase</keyword>
<keyword id="KW-0903">Direct protein sequencing</keyword>
<keyword id="KW-0238">DNA-binding</keyword>
<keyword id="KW-0663">Pyridoxal phosphate</keyword>
<keyword id="KW-1185">Reference proteome</keyword>
<keyword id="KW-0678">Repressor</keyword>
<keyword id="KW-0804">Transcription</keyword>
<keyword id="KW-0805">Transcription regulation</keyword>
<keyword id="KW-0808">Transferase</keyword>
<proteinExistence type="evidence at protein level"/>
<reference key="1">
    <citation type="book" date="2006" name="Gram positive pathogens, 2nd edition">
        <title>The Staphylococcus aureus NCTC 8325 genome.</title>
        <editorList>
            <person name="Fischetti V."/>
            <person name="Novick R."/>
            <person name="Ferretti J."/>
            <person name="Portnoy D."/>
            <person name="Rood J."/>
        </editorList>
        <authorList>
            <person name="Gillaspy A.F."/>
            <person name="Worrell V."/>
            <person name="Orvis J."/>
            <person name="Roe B.A."/>
            <person name="Dyer D.W."/>
            <person name="Iandolo J.J."/>
        </authorList>
    </citation>
    <scope>NUCLEOTIDE SEQUENCE [LARGE SCALE GENOMIC DNA]</scope>
    <source>
        <strain>NCTC 8325 / PS 47</strain>
    </source>
</reference>
<reference key="2">
    <citation type="journal article" date="2007" name="J. Bacteriol.">
        <title>The transcriptional regulators norG and mgrA modulate resistance to both quinolones and beta-lactams in Staphylococcus aureus.</title>
        <authorList>
            <person name="Truong-Bolduc Q.C."/>
            <person name="Hooper D.C."/>
        </authorList>
    </citation>
    <scope>PROTEIN SEQUENCE OF 2-13</scope>
    <scope>FUNCTION AS A TRANSCRIPTIONAL REGULATOR</scope>
    <scope>INDUCTION</scope>
</reference>
<sequence length="442" mass="51303">MKIPSHRQLAIQYNVNRVTIIKSIELLEAEGFIYTKVGSGTYVNDYLNEAHITNKWSEMMLWSSQQRSQYTVQLINKIETDDSYIHISKGELGISLMPHIQLKKAMSNTASHIEDLSFGYNNGYGYIKLRDIIVERMSKQGINVGRENVMITSGALHAIQLLSIGFLGQDAIIISNTPSYIHSTNVFEQLNFRHIDVPYNQINEIDTIIDRFINFKNKAIYIEPRFNNPTGRSLTNEQKKNIITYSERHNIPIIEDDIFRDIFFSDPTPSIKTYDKLGKVIHISSFSKTIAPAIRIGWIVASEKIIEQLADVRMQIDYGSSILSQMVVYEMLKNKSYDKHLVKLRYVLKDKRDFMLNILNNLFKDIAHWEVPSGGYFVWLVFKIDIDIKYLFYELLSKEKILINPGYIYGSKEKSIRLSFAFESNENIKHALYKIYTYVKKV</sequence>